<sequence>MPIRIPDQLPASDVLRTENIFVMSETRAASQEIRPLRVLILNLMPKKIETETQFLRLLSNSPLQVNVELLRIDNRPSKNTPTEHLDTFYRQFEMVKGKNFDGLIITGAPLGLVQFEDVIYWDHLKTIMEWAKDHVTSTLYVCWAAQAGLKLLYDLPKKTRKEKLSGVYHHQIHNPFHPILRGFDDTFLAPHSRYADFSPHFLEEHTDLDILATSDVAGVYLATTKDKRNVFVTGHPEYDSHTLHNEYIRDLGEGMEPAIPVNYYPNNNPDNPPIASWRSHGHLLFLNWLNYCVYQQTPYDLDHFSEDAFTKDD</sequence>
<proteinExistence type="inferred from homology"/>
<keyword id="KW-0012">Acyltransferase</keyword>
<keyword id="KW-0028">Amino-acid biosynthesis</keyword>
<keyword id="KW-0963">Cytoplasm</keyword>
<keyword id="KW-0486">Methionine biosynthesis</keyword>
<keyword id="KW-0808">Transferase</keyword>
<organism>
    <name type="scientific">Vibrio parahaemolyticus serotype O3:K6 (strain RIMD 2210633)</name>
    <dbReference type="NCBI Taxonomy" id="223926"/>
    <lineage>
        <taxon>Bacteria</taxon>
        <taxon>Pseudomonadati</taxon>
        <taxon>Pseudomonadota</taxon>
        <taxon>Gammaproteobacteria</taxon>
        <taxon>Vibrionales</taxon>
        <taxon>Vibrionaceae</taxon>
        <taxon>Vibrio</taxon>
    </lineage>
</organism>
<evidence type="ECO:0000255" key="1">
    <source>
        <dbReference type="HAMAP-Rule" id="MF_00295"/>
    </source>
</evidence>
<accession>Q87NW7</accession>
<gene>
    <name evidence="1" type="primary">metAS</name>
    <name type="ordered locus">VP1751</name>
</gene>
<feature type="chain" id="PRO_0000199765" description="Homoserine O-succinyltransferase">
    <location>
        <begin position="1"/>
        <end position="313"/>
    </location>
</feature>
<feature type="active site" description="Acyl-thioester intermediate" evidence="1">
    <location>
        <position position="142"/>
    </location>
</feature>
<feature type="active site" description="Proton acceptor" evidence="1">
    <location>
        <position position="235"/>
    </location>
</feature>
<feature type="active site" evidence="1">
    <location>
        <position position="237"/>
    </location>
</feature>
<feature type="binding site" evidence="1">
    <location>
        <position position="163"/>
    </location>
    <ligand>
        <name>substrate</name>
    </ligand>
</feature>
<feature type="binding site" evidence="1">
    <location>
        <position position="192"/>
    </location>
    <ligand>
        <name>substrate</name>
    </ligand>
</feature>
<feature type="binding site" evidence="1">
    <location>
        <position position="249"/>
    </location>
    <ligand>
        <name>substrate</name>
    </ligand>
</feature>
<feature type="site" description="Important for acyl-CoA specificity" evidence="1">
    <location>
        <position position="111"/>
    </location>
</feature>
<feature type="site" description="Important for substrate specificity" evidence="1">
    <location>
        <position position="192"/>
    </location>
</feature>
<name>METAS_VIBPA</name>
<protein>
    <recommendedName>
        <fullName evidence="1">Homoserine O-succinyltransferase</fullName>
        <shortName evidence="1">HST</shortName>
        <ecNumber evidence="1">2.3.1.46</ecNumber>
    </recommendedName>
    <alternativeName>
        <fullName evidence="1">Homoserine transsuccinylase</fullName>
        <shortName evidence="1">HTS</shortName>
    </alternativeName>
</protein>
<reference key="1">
    <citation type="journal article" date="2003" name="Lancet">
        <title>Genome sequence of Vibrio parahaemolyticus: a pathogenic mechanism distinct from that of V. cholerae.</title>
        <authorList>
            <person name="Makino K."/>
            <person name="Oshima K."/>
            <person name="Kurokawa K."/>
            <person name="Yokoyama K."/>
            <person name="Uda T."/>
            <person name="Tagomori K."/>
            <person name="Iijima Y."/>
            <person name="Najima M."/>
            <person name="Nakano M."/>
            <person name="Yamashita A."/>
            <person name="Kubota Y."/>
            <person name="Kimura S."/>
            <person name="Yasunaga T."/>
            <person name="Honda T."/>
            <person name="Shinagawa H."/>
            <person name="Hattori M."/>
            <person name="Iida T."/>
        </authorList>
    </citation>
    <scope>NUCLEOTIDE SEQUENCE [LARGE SCALE GENOMIC DNA]</scope>
    <source>
        <strain>RIMD 2210633</strain>
    </source>
</reference>
<dbReference type="EC" id="2.3.1.46" evidence="1"/>
<dbReference type="EMBL" id="BA000031">
    <property type="protein sequence ID" value="BAC60014.1"/>
    <property type="molecule type" value="Genomic_DNA"/>
</dbReference>
<dbReference type="RefSeq" id="NP_798130.1">
    <property type="nucleotide sequence ID" value="NC_004603.1"/>
</dbReference>
<dbReference type="SMR" id="Q87NW7"/>
<dbReference type="GeneID" id="1189258"/>
<dbReference type="KEGG" id="vpa:VP1751"/>
<dbReference type="PATRIC" id="fig|223926.6.peg.1669"/>
<dbReference type="eggNOG" id="COG1897">
    <property type="taxonomic scope" value="Bacteria"/>
</dbReference>
<dbReference type="HOGENOM" id="CLU_057851_0_1_6"/>
<dbReference type="UniPathway" id="UPA00051">
    <property type="reaction ID" value="UER00075"/>
</dbReference>
<dbReference type="Proteomes" id="UP000002493">
    <property type="component" value="Chromosome 1"/>
</dbReference>
<dbReference type="GO" id="GO:0005737">
    <property type="term" value="C:cytoplasm"/>
    <property type="evidence" value="ECO:0007669"/>
    <property type="project" value="UniProtKB-SubCell"/>
</dbReference>
<dbReference type="GO" id="GO:0004414">
    <property type="term" value="F:homoserine O-acetyltransferase activity"/>
    <property type="evidence" value="ECO:0007669"/>
    <property type="project" value="UniProtKB-UniRule"/>
</dbReference>
<dbReference type="GO" id="GO:0008899">
    <property type="term" value="F:homoserine O-succinyltransferase activity"/>
    <property type="evidence" value="ECO:0007669"/>
    <property type="project" value="UniProtKB-EC"/>
</dbReference>
<dbReference type="GO" id="GO:0019281">
    <property type="term" value="P:L-methionine biosynthetic process from homoserine via O-succinyl-L-homoserine and cystathionine"/>
    <property type="evidence" value="ECO:0007669"/>
    <property type="project" value="InterPro"/>
</dbReference>
<dbReference type="CDD" id="cd03131">
    <property type="entry name" value="GATase1_HTS"/>
    <property type="match status" value="1"/>
</dbReference>
<dbReference type="FunFam" id="3.40.50.880:FF:000004">
    <property type="entry name" value="Homoserine O-succinyltransferase"/>
    <property type="match status" value="1"/>
</dbReference>
<dbReference type="Gene3D" id="3.40.50.880">
    <property type="match status" value="1"/>
</dbReference>
<dbReference type="HAMAP" id="MF_00295">
    <property type="entry name" value="MetA_acyltransf"/>
    <property type="match status" value="1"/>
</dbReference>
<dbReference type="InterPro" id="IPR029062">
    <property type="entry name" value="Class_I_gatase-like"/>
</dbReference>
<dbReference type="InterPro" id="IPR005697">
    <property type="entry name" value="HST_MetA"/>
</dbReference>
<dbReference type="InterPro" id="IPR033752">
    <property type="entry name" value="MetA_family"/>
</dbReference>
<dbReference type="NCBIfam" id="TIGR01001">
    <property type="entry name" value="metA"/>
    <property type="match status" value="1"/>
</dbReference>
<dbReference type="PANTHER" id="PTHR20919">
    <property type="entry name" value="HOMOSERINE O-SUCCINYLTRANSFERASE"/>
    <property type="match status" value="1"/>
</dbReference>
<dbReference type="PANTHER" id="PTHR20919:SF0">
    <property type="entry name" value="HOMOSERINE O-SUCCINYLTRANSFERASE"/>
    <property type="match status" value="1"/>
</dbReference>
<dbReference type="Pfam" id="PF04204">
    <property type="entry name" value="HTS"/>
    <property type="match status" value="1"/>
</dbReference>
<dbReference type="PIRSF" id="PIRSF000450">
    <property type="entry name" value="H_ser_succinyltr"/>
    <property type="match status" value="1"/>
</dbReference>
<dbReference type="SUPFAM" id="SSF52317">
    <property type="entry name" value="Class I glutamine amidotransferase-like"/>
    <property type="match status" value="1"/>
</dbReference>
<comment type="function">
    <text evidence="1">Transfers a succinyl group from succinyl-CoA to L-homoserine, forming succinyl-L-homoserine.</text>
</comment>
<comment type="catalytic activity">
    <reaction evidence="1">
        <text>L-homoserine + succinyl-CoA = O-succinyl-L-homoserine + CoA</text>
        <dbReference type="Rhea" id="RHEA:22008"/>
        <dbReference type="ChEBI" id="CHEBI:57287"/>
        <dbReference type="ChEBI" id="CHEBI:57292"/>
        <dbReference type="ChEBI" id="CHEBI:57476"/>
        <dbReference type="ChEBI" id="CHEBI:57661"/>
        <dbReference type="EC" id="2.3.1.46"/>
    </reaction>
</comment>
<comment type="pathway">
    <text evidence="1">Amino-acid biosynthesis; L-methionine biosynthesis via de novo pathway; O-succinyl-L-homoserine from L-homoserine: step 1/1.</text>
</comment>
<comment type="subcellular location">
    <subcellularLocation>
        <location evidence="1">Cytoplasm</location>
    </subcellularLocation>
</comment>
<comment type="similarity">
    <text evidence="1">Belongs to the MetA family.</text>
</comment>